<name>3SDC4_OPHHA</name>
<keyword id="KW-0123">Cardiotoxin</keyword>
<keyword id="KW-1015">Disulfide bond</keyword>
<keyword id="KW-1213">G-protein coupled receptor impairing toxin</keyword>
<keyword id="KW-0964">Secreted</keyword>
<keyword id="KW-0732">Signal</keyword>
<keyword id="KW-0800">Toxin</keyword>
<organism>
    <name type="scientific">Ophiophagus hannah</name>
    <name type="common">King cobra</name>
    <name type="synonym">Naja hannah</name>
    <dbReference type="NCBI Taxonomy" id="8665"/>
    <lineage>
        <taxon>Eukaryota</taxon>
        <taxon>Metazoa</taxon>
        <taxon>Chordata</taxon>
        <taxon>Craniata</taxon>
        <taxon>Vertebrata</taxon>
        <taxon>Euteleostomi</taxon>
        <taxon>Lepidosauria</taxon>
        <taxon>Squamata</taxon>
        <taxon>Bifurcata</taxon>
        <taxon>Unidentata</taxon>
        <taxon>Episquamata</taxon>
        <taxon>Toxicofera</taxon>
        <taxon>Serpentes</taxon>
        <taxon>Colubroidea</taxon>
        <taxon>Elapidae</taxon>
        <taxon>Elapinae</taxon>
        <taxon>Ophiophagus</taxon>
    </lineage>
</organism>
<dbReference type="EMBL" id="DQ273578">
    <property type="protein sequence ID" value="ABB83632.1"/>
    <property type="molecule type" value="mRNA"/>
</dbReference>
<dbReference type="SMR" id="Q2VBN7"/>
<dbReference type="TCDB" id="1.C.74.1.3">
    <property type="family name" value="the snake cytotoxin (sct) family"/>
</dbReference>
<dbReference type="GO" id="GO:0005576">
    <property type="term" value="C:extracellular region"/>
    <property type="evidence" value="ECO:0007669"/>
    <property type="project" value="UniProtKB-SubCell"/>
</dbReference>
<dbReference type="GO" id="GO:0090729">
    <property type="term" value="F:toxin activity"/>
    <property type="evidence" value="ECO:0007669"/>
    <property type="project" value="UniProtKB-KW"/>
</dbReference>
<dbReference type="CDD" id="cd00206">
    <property type="entry name" value="TFP_snake_toxin"/>
    <property type="match status" value="1"/>
</dbReference>
<dbReference type="Gene3D" id="2.10.60.10">
    <property type="entry name" value="CD59"/>
    <property type="match status" value="1"/>
</dbReference>
<dbReference type="InterPro" id="IPR003572">
    <property type="entry name" value="Cytotoxin_Cobra"/>
</dbReference>
<dbReference type="InterPro" id="IPR003571">
    <property type="entry name" value="Snake_3FTx"/>
</dbReference>
<dbReference type="InterPro" id="IPR045860">
    <property type="entry name" value="Snake_toxin-like_sf"/>
</dbReference>
<dbReference type="InterPro" id="IPR018354">
    <property type="entry name" value="Snake_toxin_con_site"/>
</dbReference>
<dbReference type="InterPro" id="IPR054131">
    <property type="entry name" value="Toxin_cobra-type"/>
</dbReference>
<dbReference type="Pfam" id="PF21947">
    <property type="entry name" value="Toxin_cobra-type"/>
    <property type="match status" value="1"/>
</dbReference>
<dbReference type="PRINTS" id="PR00282">
    <property type="entry name" value="CYTOTOXIN"/>
</dbReference>
<dbReference type="SUPFAM" id="SSF57302">
    <property type="entry name" value="Snake toxin-like"/>
    <property type="match status" value="1"/>
</dbReference>
<dbReference type="PROSITE" id="PS00272">
    <property type="entry name" value="SNAKE_TOXIN"/>
    <property type="match status" value="1"/>
</dbReference>
<sequence>MKTLLLTLVVVTIVCLDLGYTRKCLNTPLPLIYTTCPIGQDKCVKMTIKKLPSKYDVIRGCTDICPKSSADVVVVCCDTNKCDK</sequence>
<evidence type="ECO:0000250" key="1">
    <source>
        <dbReference type="UniProtKB" id="Q69CK0"/>
    </source>
</evidence>
<evidence type="ECO:0000305" key="2"/>
<evidence type="ECO:0000305" key="3">
    <source>
    </source>
</evidence>
<protein>
    <recommendedName>
        <fullName>Beta-cardiotoxin CTX14</fullName>
    </recommendedName>
</protein>
<comment type="function">
    <text evidence="1">Acts as a beta-blocker by binding to beta-1 and beta-2 adrenergic receptors (ADRB1 and ADRB2). It dose-dependently decreases the heart rate (bradycardia), whereas conventional cardiotoxins increases it. At 100 mg/kg, intraperitoneal injection into mice provokes labored breathing, impaired locomotion, lack of response to external stimuli, and death (after 30 minutes).</text>
</comment>
<comment type="subcellular location">
    <subcellularLocation>
        <location evidence="3">Secreted</location>
    </subcellularLocation>
</comment>
<comment type="tissue specificity">
    <text evidence="3">Expressed by the venom gland.</text>
</comment>
<comment type="miscellaneous">
    <text evidence="1">Negative results: does not affect blood coagulation and does not show significant hemolytic activity.</text>
</comment>
<comment type="miscellaneous">
    <text evidence="2">Is classified as a P-type cytotoxin, since a proline residue stands at position 52 (Pro-31 in standard classification).</text>
</comment>
<comment type="similarity">
    <text evidence="2">Belongs to the three-finger toxin family. Short-chain subfamily. Aminergic toxin sub-subfamily.</text>
</comment>
<reference key="1">
    <citation type="journal article" date="2006" name="Biochem. J.">
        <title>Novel genes encoding six kinds of three-finger toxins in Ophiophagus hannah (king cobra) and function characterization of two recombinant long-chain neurotoxins.</title>
        <authorList>
            <person name="Li J."/>
            <person name="Zhang H."/>
            <person name="Liu J."/>
            <person name="Xu K."/>
        </authorList>
    </citation>
    <scope>NUCLEOTIDE SEQUENCE [MRNA]</scope>
    <source>
        <tissue>Venom gland</tissue>
    </source>
</reference>
<reference key="2">
    <citation type="journal article" date="2013" name="Proc. Natl. Acad. Sci. U.S.A.">
        <title>The king cobra genome reveals dynamic gene evolution and adaptation in the snake venom system.</title>
        <authorList>
            <person name="Vonk F.J."/>
            <person name="Casewell N.R."/>
            <person name="Henkel C.V."/>
            <person name="Heimberg A.M."/>
            <person name="Jansen H.J."/>
            <person name="McCleary R.J."/>
            <person name="Kerkkamp H.M."/>
            <person name="Vos R.A."/>
            <person name="Guerreiro I."/>
            <person name="Calvete J.J."/>
            <person name="Wuster W."/>
            <person name="Woods A.E."/>
            <person name="Logan J.M."/>
            <person name="Harrison R.A."/>
            <person name="Castoe T.A."/>
            <person name="de Koning A.P."/>
            <person name="Pollock D.D."/>
            <person name="Yandell M."/>
            <person name="Calderon D."/>
            <person name="Renjifo C."/>
            <person name="Currier R.B."/>
            <person name="Salgado D."/>
            <person name="Pla D."/>
            <person name="Sanz L."/>
            <person name="Hyder A.S."/>
            <person name="Ribeiro J.M."/>
            <person name="Arntzen J.W."/>
            <person name="van den Thillart G.E."/>
            <person name="Boetzer M."/>
            <person name="Pirovano W."/>
            <person name="Dirks R.P."/>
            <person name="Spaink H.P."/>
            <person name="Duboule D."/>
            <person name="McGlinn E."/>
            <person name="Kini R.M."/>
            <person name="Richardson M.K."/>
        </authorList>
    </citation>
    <scope>IDENTIFICATION BY MASS SPECTROMETRY</scope>
    <scope>SUBCELLULAR LOCATION</scope>
    <source>
        <tissue>Venom</tissue>
    </source>
</reference>
<proteinExistence type="evidence at protein level"/>
<feature type="signal peptide" evidence="1">
    <location>
        <begin position="1"/>
        <end position="21"/>
    </location>
</feature>
<feature type="chain" id="PRO_5000006488" description="Beta-cardiotoxin CTX14">
    <location>
        <begin position="22"/>
        <end position="84"/>
    </location>
</feature>
<feature type="disulfide bond" evidence="1">
    <location>
        <begin position="24"/>
        <end position="43"/>
    </location>
</feature>
<feature type="disulfide bond" evidence="1">
    <location>
        <begin position="36"/>
        <end position="61"/>
    </location>
</feature>
<feature type="disulfide bond" evidence="1">
    <location>
        <begin position="65"/>
        <end position="76"/>
    </location>
</feature>
<feature type="disulfide bond" evidence="1">
    <location>
        <begin position="77"/>
        <end position="82"/>
    </location>
</feature>
<accession>Q2VBN7</accession>